<evidence type="ECO:0000250" key="1"/>
<evidence type="ECO:0000250" key="2">
    <source>
        <dbReference type="UniProtKB" id="P58137"/>
    </source>
</evidence>
<evidence type="ECO:0000250" key="3">
    <source>
        <dbReference type="UniProtKB" id="Q8VHK0"/>
    </source>
</evidence>
<evidence type="ECO:0000255" key="4"/>
<evidence type="ECO:0000256" key="5">
    <source>
        <dbReference type="SAM" id="MobiDB-lite"/>
    </source>
</evidence>
<evidence type="ECO:0000269" key="6">
    <source>
    </source>
</evidence>
<evidence type="ECO:0000269" key="7">
    <source>
    </source>
</evidence>
<evidence type="ECO:0000269" key="8">
    <source>
    </source>
</evidence>
<evidence type="ECO:0000269" key="9">
    <source>
    </source>
</evidence>
<evidence type="ECO:0000269" key="10">
    <source>
    </source>
</evidence>
<evidence type="ECO:0000303" key="11">
    <source>
    </source>
</evidence>
<evidence type="ECO:0000303" key="12">
    <source>
    </source>
</evidence>
<evidence type="ECO:0000305" key="13"/>
<evidence type="ECO:0000305" key="14">
    <source>
    </source>
</evidence>
<evidence type="ECO:0000305" key="15">
    <source>
    </source>
</evidence>
<evidence type="ECO:0000305" key="16">
    <source>
    </source>
</evidence>
<sequence length="319" mass="35914">MSSPQAPEDGQGCGDRGDPPGDLRSVLVTTVLNLEPLDEDLFRGRHYWVPAKRLFGGQIVGQALVAAAKSVSEDVHVHSLHCYFVRAGDPKLPVLYQVERTRTGSSFSVRSVKAVQHGKPIFICQASFQQAQPSPMQHQFSMPTVPPPEELLDCETLIDQYLRDPNLQKRYPLALNRIAAQEVPIEIKPVNPSPLSQLQRMEPKQMFWVRARGYIGEGDMKMHCCVAAYISDYAFLGTALLPHQWQHKVHFMVSLDHSMWFHAPFRADHWMLYECESPWAGGSRGLVHGRLWRQDGVLAVTCAQEGVIRVKPQVSESKL</sequence>
<organism>
    <name type="scientific">Homo sapiens</name>
    <name type="common">Human</name>
    <dbReference type="NCBI Taxonomy" id="9606"/>
    <lineage>
        <taxon>Eukaryota</taxon>
        <taxon>Metazoa</taxon>
        <taxon>Chordata</taxon>
        <taxon>Craniata</taxon>
        <taxon>Vertebrata</taxon>
        <taxon>Euteleostomi</taxon>
        <taxon>Mammalia</taxon>
        <taxon>Eutheria</taxon>
        <taxon>Euarchontoglires</taxon>
        <taxon>Primates</taxon>
        <taxon>Haplorrhini</taxon>
        <taxon>Catarrhini</taxon>
        <taxon>Hominidae</taxon>
        <taxon>Homo</taxon>
    </lineage>
</organism>
<accession>O14734</accession>
<accession>O15261</accession>
<accession>Q17RX4</accession>
<proteinExistence type="evidence at protein level"/>
<name>ACOT8_HUMAN</name>
<feature type="chain" id="PRO_0000202152" description="Acyl-coenzyme A thioesterase 8">
    <location>
        <begin position="1"/>
        <end position="319"/>
    </location>
</feature>
<feature type="region of interest" description="Disordered" evidence="5">
    <location>
        <begin position="1"/>
        <end position="20"/>
    </location>
</feature>
<feature type="short sequence motif" description="Microbody targeting signal" evidence="4">
    <location>
        <begin position="317"/>
        <end position="319"/>
    </location>
</feature>
<feature type="active site" description="Charge relay system" evidence="1">
    <location>
        <position position="232"/>
    </location>
</feature>
<feature type="active site" description="Charge relay system" evidence="1">
    <location>
        <position position="254"/>
    </location>
</feature>
<feature type="active site" description="Charge relay system" evidence="1">
    <location>
        <position position="304"/>
    </location>
</feature>
<feature type="mutagenesis site" description="Reduces Acyl-CoA thioesterase activity and peroxisome proliferation." evidence="8">
    <original>H</original>
    <variation>A</variation>
    <location>
        <position position="78"/>
    </location>
</feature>
<feature type="sequence conflict" description="In Ref. 2; CAA60024." evidence="13" ref="2">
    <original>LWR</original>
    <variation>VWS</variation>
    <location>
        <begin position="291"/>
        <end position="293"/>
    </location>
</feature>
<feature type="sequence conflict" description="In Ref. 2; CAA60024." evidence="13" ref="2">
    <original>L</original>
    <variation>R</variation>
    <location>
        <position position="319"/>
    </location>
</feature>
<comment type="function">
    <text evidence="2 8 9 10">Catalyzes the hydrolysis of acyl-CoAs into free fatty acids and coenzyme A (CoASH), regulating their respective intracellular levels (PubMed:15194431, PubMed:9153233, PubMed:9299485). Displays no strong substrate specificity with respect to the carboxylic acid moiety of Acyl-CoAs (By similarity). Hydrolyzes medium length (C2 to C20) straight-chain, saturated and unsaturated acyl-CoAS but is inactive towards substrates with longer aliphatic chains (PubMed:9153233, PubMed:9299485). Moreover, it catalyzes the hydrolysis of CoA esters of bile acids, such as choloyl-CoA and chenodeoxycholoyl-CoA and competes with bile acid CoA:amino acid N-acyltransferase (BAAT) (By similarity). Is also able to hydrolyze CoA esters of dicarboxylic acids (By similarity). It is involved in the metabolic regulation of peroxisome proliferation (PubMed:15194431).</text>
</comment>
<comment type="function">
    <text evidence="9">(Microbial infection) May mediate Nef-induced down-regulation of CD4 cell-surface expression (PubMed:9153233).</text>
</comment>
<comment type="catalytic activity">
    <reaction evidence="2">
        <text>choloyl-CoA + H2O = cholate + CoA + H(+)</text>
        <dbReference type="Rhea" id="RHEA:14541"/>
        <dbReference type="ChEBI" id="CHEBI:15377"/>
        <dbReference type="ChEBI" id="CHEBI:15378"/>
        <dbReference type="ChEBI" id="CHEBI:29747"/>
        <dbReference type="ChEBI" id="CHEBI:57287"/>
        <dbReference type="ChEBI" id="CHEBI:57373"/>
        <dbReference type="EC" id="3.1.2.27"/>
    </reaction>
    <physiologicalReaction direction="left-to-right" evidence="2">
        <dbReference type="Rhea" id="RHEA:14542"/>
    </physiologicalReaction>
</comment>
<comment type="catalytic activity">
    <reaction evidence="2">
        <text>chenodeoxycholoyl-CoA + H2O = chenodeoxycholate + CoA + H(+)</text>
        <dbReference type="Rhea" id="RHEA:31511"/>
        <dbReference type="ChEBI" id="CHEBI:15377"/>
        <dbReference type="ChEBI" id="CHEBI:15378"/>
        <dbReference type="ChEBI" id="CHEBI:36234"/>
        <dbReference type="ChEBI" id="CHEBI:57287"/>
        <dbReference type="ChEBI" id="CHEBI:62989"/>
        <dbReference type="EC" id="3.1.2.27"/>
    </reaction>
    <physiologicalReaction direction="left-to-right" evidence="2">
        <dbReference type="Rhea" id="RHEA:31512"/>
    </physiologicalReaction>
</comment>
<comment type="catalytic activity">
    <reaction evidence="7 10">
        <text>acetyl-CoA + H2O = acetate + CoA + H(+)</text>
        <dbReference type="Rhea" id="RHEA:20289"/>
        <dbReference type="ChEBI" id="CHEBI:15377"/>
        <dbReference type="ChEBI" id="CHEBI:15378"/>
        <dbReference type="ChEBI" id="CHEBI:30089"/>
        <dbReference type="ChEBI" id="CHEBI:57287"/>
        <dbReference type="ChEBI" id="CHEBI:57288"/>
        <dbReference type="EC" id="3.1.2.1"/>
    </reaction>
    <physiologicalReaction direction="left-to-right" evidence="16">
        <dbReference type="Rhea" id="RHEA:20290"/>
    </physiologicalReaction>
</comment>
<comment type="catalytic activity">
    <reaction evidence="7 10">
        <text>butanoyl-CoA + H2O = butanoate + CoA + H(+)</text>
        <dbReference type="Rhea" id="RHEA:40111"/>
        <dbReference type="ChEBI" id="CHEBI:15377"/>
        <dbReference type="ChEBI" id="CHEBI:15378"/>
        <dbReference type="ChEBI" id="CHEBI:17968"/>
        <dbReference type="ChEBI" id="CHEBI:57287"/>
        <dbReference type="ChEBI" id="CHEBI:57371"/>
    </reaction>
    <physiologicalReaction direction="left-to-right" evidence="16">
        <dbReference type="Rhea" id="RHEA:40112"/>
    </physiologicalReaction>
</comment>
<comment type="catalytic activity">
    <reaction evidence="7">
        <text>2-methylpropanoyl-CoA + H2O = 2-methylpropanoate + CoA + H(+)</text>
        <dbReference type="Rhea" id="RHEA:40799"/>
        <dbReference type="ChEBI" id="CHEBI:15377"/>
        <dbReference type="ChEBI" id="CHEBI:15378"/>
        <dbReference type="ChEBI" id="CHEBI:48944"/>
        <dbReference type="ChEBI" id="CHEBI:57287"/>
        <dbReference type="ChEBI" id="CHEBI:57338"/>
    </reaction>
    <physiologicalReaction direction="left-to-right" evidence="14">
        <dbReference type="Rhea" id="RHEA:40800"/>
    </physiologicalReaction>
</comment>
<comment type="catalytic activity">
    <reaction evidence="9">
        <text>hexanoyl-CoA + H2O = hexanoate + CoA + H(+)</text>
        <dbReference type="Rhea" id="RHEA:40115"/>
        <dbReference type="ChEBI" id="CHEBI:15377"/>
        <dbReference type="ChEBI" id="CHEBI:15378"/>
        <dbReference type="ChEBI" id="CHEBI:17120"/>
        <dbReference type="ChEBI" id="CHEBI:57287"/>
        <dbReference type="ChEBI" id="CHEBI:62620"/>
    </reaction>
    <physiologicalReaction direction="left-to-right" evidence="15">
        <dbReference type="Rhea" id="RHEA:40116"/>
    </physiologicalReaction>
</comment>
<comment type="catalytic activity">
    <reaction evidence="7 9 10">
        <text>octanoyl-CoA + H2O = octanoate + CoA + H(+)</text>
        <dbReference type="Rhea" id="RHEA:30143"/>
        <dbReference type="ChEBI" id="CHEBI:15377"/>
        <dbReference type="ChEBI" id="CHEBI:15378"/>
        <dbReference type="ChEBI" id="CHEBI:25646"/>
        <dbReference type="ChEBI" id="CHEBI:57287"/>
        <dbReference type="ChEBI" id="CHEBI:57386"/>
    </reaction>
    <physiologicalReaction direction="left-to-right" evidence="16">
        <dbReference type="Rhea" id="RHEA:30144"/>
    </physiologicalReaction>
</comment>
<comment type="catalytic activity">
    <reaction evidence="7 9 10">
        <text>decanoyl-CoA + H2O = decanoate + CoA + H(+)</text>
        <dbReference type="Rhea" id="RHEA:40059"/>
        <dbReference type="ChEBI" id="CHEBI:15377"/>
        <dbReference type="ChEBI" id="CHEBI:15378"/>
        <dbReference type="ChEBI" id="CHEBI:27689"/>
        <dbReference type="ChEBI" id="CHEBI:57287"/>
        <dbReference type="ChEBI" id="CHEBI:61430"/>
    </reaction>
    <physiologicalReaction direction="left-to-right" evidence="16">
        <dbReference type="Rhea" id="RHEA:40060"/>
    </physiologicalReaction>
</comment>
<comment type="catalytic activity">
    <reaction evidence="9">
        <text>dodecanoyl-CoA + H2O = dodecanoate + CoA + H(+)</text>
        <dbReference type="Rhea" id="RHEA:30135"/>
        <dbReference type="ChEBI" id="CHEBI:15377"/>
        <dbReference type="ChEBI" id="CHEBI:15378"/>
        <dbReference type="ChEBI" id="CHEBI:18262"/>
        <dbReference type="ChEBI" id="CHEBI:57287"/>
        <dbReference type="ChEBI" id="CHEBI:57375"/>
    </reaction>
    <physiologicalReaction direction="left-to-right" evidence="15">
        <dbReference type="Rhea" id="RHEA:30136"/>
    </physiologicalReaction>
</comment>
<comment type="catalytic activity">
    <reaction evidence="7 9 10">
        <text>tetradecanoyl-CoA + H2O = tetradecanoate + CoA + H(+)</text>
        <dbReference type="Rhea" id="RHEA:40119"/>
        <dbReference type="ChEBI" id="CHEBI:15377"/>
        <dbReference type="ChEBI" id="CHEBI:15378"/>
        <dbReference type="ChEBI" id="CHEBI:30807"/>
        <dbReference type="ChEBI" id="CHEBI:57287"/>
        <dbReference type="ChEBI" id="CHEBI:57385"/>
    </reaction>
    <physiologicalReaction direction="left-to-right" evidence="16">
        <dbReference type="Rhea" id="RHEA:40120"/>
    </physiologicalReaction>
</comment>
<comment type="catalytic activity">
    <reaction evidence="9 10">
        <text>hexadecanoyl-CoA + H2O = hexadecanoate + CoA + H(+)</text>
        <dbReference type="Rhea" id="RHEA:16645"/>
        <dbReference type="ChEBI" id="CHEBI:7896"/>
        <dbReference type="ChEBI" id="CHEBI:15377"/>
        <dbReference type="ChEBI" id="CHEBI:15378"/>
        <dbReference type="ChEBI" id="CHEBI:57287"/>
        <dbReference type="ChEBI" id="CHEBI:57379"/>
        <dbReference type="EC" id="3.1.2.2"/>
    </reaction>
    <physiologicalReaction direction="left-to-right" evidence="16">
        <dbReference type="Rhea" id="RHEA:16646"/>
    </physiologicalReaction>
</comment>
<comment type="catalytic activity">
    <reaction evidence="10">
        <text>octadecanoyl-CoA + H2O = octadecanoate + CoA + H(+)</text>
        <dbReference type="Rhea" id="RHEA:30139"/>
        <dbReference type="ChEBI" id="CHEBI:15377"/>
        <dbReference type="ChEBI" id="CHEBI:15378"/>
        <dbReference type="ChEBI" id="CHEBI:25629"/>
        <dbReference type="ChEBI" id="CHEBI:57287"/>
        <dbReference type="ChEBI" id="CHEBI:57394"/>
    </reaction>
    <physiologicalReaction direction="left-to-right" evidence="16">
        <dbReference type="Rhea" id="RHEA:30140"/>
    </physiologicalReaction>
</comment>
<comment type="catalytic activity">
    <reaction evidence="2">
        <text>malonyl-CoA + H2O = malonate + CoA + H(+)</text>
        <dbReference type="Rhea" id="RHEA:40219"/>
        <dbReference type="ChEBI" id="CHEBI:15377"/>
        <dbReference type="ChEBI" id="CHEBI:15378"/>
        <dbReference type="ChEBI" id="CHEBI:15792"/>
        <dbReference type="ChEBI" id="CHEBI:57287"/>
        <dbReference type="ChEBI" id="CHEBI:57384"/>
    </reaction>
    <physiologicalReaction direction="left-to-right" evidence="2">
        <dbReference type="Rhea" id="RHEA:40220"/>
    </physiologicalReaction>
</comment>
<comment type="catalytic activity">
    <reaction evidence="2">
        <text>acetoacetyl-CoA + H2O = acetoacetate + CoA + H(+)</text>
        <dbReference type="Rhea" id="RHEA:15673"/>
        <dbReference type="ChEBI" id="CHEBI:13705"/>
        <dbReference type="ChEBI" id="CHEBI:15377"/>
        <dbReference type="ChEBI" id="CHEBI:15378"/>
        <dbReference type="ChEBI" id="CHEBI:57286"/>
        <dbReference type="ChEBI" id="CHEBI:57287"/>
        <dbReference type="EC" id="3.1.2.11"/>
    </reaction>
    <physiologicalReaction direction="left-to-right" evidence="2">
        <dbReference type="Rhea" id="RHEA:15674"/>
    </physiologicalReaction>
</comment>
<comment type="catalytic activity">
    <reaction evidence="2">
        <text>propanoyl-CoA + H2O = propanoate + CoA + H(+)</text>
        <dbReference type="Rhea" id="RHEA:40103"/>
        <dbReference type="ChEBI" id="CHEBI:15377"/>
        <dbReference type="ChEBI" id="CHEBI:15378"/>
        <dbReference type="ChEBI" id="CHEBI:17272"/>
        <dbReference type="ChEBI" id="CHEBI:57287"/>
        <dbReference type="ChEBI" id="CHEBI:57392"/>
    </reaction>
    <physiologicalReaction direction="left-to-right" evidence="2">
        <dbReference type="Rhea" id="RHEA:40104"/>
    </physiologicalReaction>
</comment>
<comment type="catalytic activity">
    <reaction evidence="2">
        <text>succinyl-CoA + H2O = succinate + CoA + H(+)</text>
        <dbReference type="Rhea" id="RHEA:11516"/>
        <dbReference type="ChEBI" id="CHEBI:15377"/>
        <dbReference type="ChEBI" id="CHEBI:15378"/>
        <dbReference type="ChEBI" id="CHEBI:30031"/>
        <dbReference type="ChEBI" id="CHEBI:57287"/>
        <dbReference type="ChEBI" id="CHEBI:57292"/>
        <dbReference type="EC" id="3.1.2.3"/>
    </reaction>
    <physiologicalReaction direction="left-to-right" evidence="2">
        <dbReference type="Rhea" id="RHEA:11517"/>
    </physiologicalReaction>
</comment>
<comment type="catalytic activity">
    <reaction evidence="2">
        <text>glutaryl-CoA + H2O = glutarate + CoA + H(+)</text>
        <dbReference type="Rhea" id="RHEA:40575"/>
        <dbReference type="ChEBI" id="CHEBI:15377"/>
        <dbReference type="ChEBI" id="CHEBI:15378"/>
        <dbReference type="ChEBI" id="CHEBI:30921"/>
        <dbReference type="ChEBI" id="CHEBI:57287"/>
        <dbReference type="ChEBI" id="CHEBI:57378"/>
    </reaction>
    <physiologicalReaction direction="left-to-right" evidence="2">
        <dbReference type="Rhea" id="RHEA:40576"/>
    </physiologicalReaction>
</comment>
<comment type="catalytic activity">
    <reaction evidence="2">
        <text>hexanedioyl-CoA + H2O = hexanedioate + CoA + H(+)</text>
        <dbReference type="Rhea" id="RHEA:40583"/>
        <dbReference type="ChEBI" id="CHEBI:15377"/>
        <dbReference type="ChEBI" id="CHEBI:15378"/>
        <dbReference type="ChEBI" id="CHEBI:17128"/>
        <dbReference type="ChEBI" id="CHEBI:57287"/>
        <dbReference type="ChEBI" id="CHEBI:76327"/>
    </reaction>
    <physiologicalReaction direction="left-to-right" evidence="2">
        <dbReference type="Rhea" id="RHEA:40584"/>
    </physiologicalReaction>
</comment>
<comment type="catalytic activity">
    <reaction evidence="2">
        <text>octanedioyl-CoA + H2O = octanedioate + CoA + H(+)</text>
        <dbReference type="Rhea" id="RHEA:40587"/>
        <dbReference type="ChEBI" id="CHEBI:15377"/>
        <dbReference type="ChEBI" id="CHEBI:15378"/>
        <dbReference type="ChEBI" id="CHEBI:57287"/>
        <dbReference type="ChEBI" id="CHEBI:76282"/>
        <dbReference type="ChEBI" id="CHEBI:76317"/>
    </reaction>
    <physiologicalReaction direction="left-to-right" evidence="2">
        <dbReference type="Rhea" id="RHEA:40588"/>
    </physiologicalReaction>
</comment>
<comment type="catalytic activity">
    <reaction evidence="2">
        <text>decanedioyl-CoA + H2O = decanedioate + CoA + H(+)</text>
        <dbReference type="Rhea" id="RHEA:40591"/>
        <dbReference type="ChEBI" id="CHEBI:15377"/>
        <dbReference type="ChEBI" id="CHEBI:15378"/>
        <dbReference type="ChEBI" id="CHEBI:57287"/>
        <dbReference type="ChEBI" id="CHEBI:76283"/>
        <dbReference type="ChEBI" id="CHEBI:76316"/>
    </reaction>
    <physiologicalReaction direction="left-to-right" evidence="2">
        <dbReference type="Rhea" id="RHEA:40592"/>
    </physiologicalReaction>
</comment>
<comment type="catalytic activity">
    <reaction evidence="2">
        <text>dodecanedioyl-CoA + H2O = dodecanedioate + CoA + H(+)</text>
        <dbReference type="Rhea" id="RHEA:40595"/>
        <dbReference type="ChEBI" id="CHEBI:15377"/>
        <dbReference type="ChEBI" id="CHEBI:15378"/>
        <dbReference type="ChEBI" id="CHEBI:57287"/>
        <dbReference type="ChEBI" id="CHEBI:76273"/>
        <dbReference type="ChEBI" id="CHEBI:76315"/>
    </reaction>
    <physiologicalReaction direction="left-to-right" evidence="2">
        <dbReference type="Rhea" id="RHEA:40596"/>
    </physiologicalReaction>
</comment>
<comment type="catalytic activity">
    <reaction evidence="2">
        <text>(9Z)-tetradecenoyl-CoA + H2O = (9Z)-tetradecenoate + CoA + H(+)</text>
        <dbReference type="Rhea" id="RHEA:40135"/>
        <dbReference type="ChEBI" id="CHEBI:15377"/>
        <dbReference type="ChEBI" id="CHEBI:15378"/>
        <dbReference type="ChEBI" id="CHEBI:32370"/>
        <dbReference type="ChEBI" id="CHEBI:57287"/>
        <dbReference type="ChEBI" id="CHEBI:65060"/>
    </reaction>
    <physiologicalReaction direction="left-to-right" evidence="2">
        <dbReference type="Rhea" id="RHEA:40136"/>
    </physiologicalReaction>
</comment>
<comment type="catalytic activity">
    <reaction evidence="2">
        <text>(9Z)-hexadecenoyl-CoA + H2O = (9Z)-hexadecenoate + CoA + H(+)</text>
        <dbReference type="Rhea" id="RHEA:40131"/>
        <dbReference type="ChEBI" id="CHEBI:15377"/>
        <dbReference type="ChEBI" id="CHEBI:15378"/>
        <dbReference type="ChEBI" id="CHEBI:32372"/>
        <dbReference type="ChEBI" id="CHEBI:57287"/>
        <dbReference type="ChEBI" id="CHEBI:61540"/>
    </reaction>
    <physiologicalReaction direction="left-to-right" evidence="2">
        <dbReference type="Rhea" id="RHEA:40132"/>
    </physiologicalReaction>
</comment>
<comment type="catalytic activity">
    <reaction evidence="2">
        <text>(9Z)-octadecenoyl-CoA + H2O = (9Z)-octadecenoate + CoA + H(+)</text>
        <dbReference type="Rhea" id="RHEA:40139"/>
        <dbReference type="ChEBI" id="CHEBI:15377"/>
        <dbReference type="ChEBI" id="CHEBI:15378"/>
        <dbReference type="ChEBI" id="CHEBI:30823"/>
        <dbReference type="ChEBI" id="CHEBI:57287"/>
        <dbReference type="ChEBI" id="CHEBI:57387"/>
    </reaction>
    <physiologicalReaction direction="left-to-right" evidence="2">
        <dbReference type="Rhea" id="RHEA:40140"/>
    </physiologicalReaction>
</comment>
<comment type="catalytic activity">
    <reaction evidence="2">
        <text>(9Z,12Z)-octadecadienoyl-CoA + H2O = (9Z,12Z)-octadecadienoate + CoA + H(+)</text>
        <dbReference type="Rhea" id="RHEA:40143"/>
        <dbReference type="ChEBI" id="CHEBI:15377"/>
        <dbReference type="ChEBI" id="CHEBI:15378"/>
        <dbReference type="ChEBI" id="CHEBI:30245"/>
        <dbReference type="ChEBI" id="CHEBI:57287"/>
        <dbReference type="ChEBI" id="CHEBI:57383"/>
    </reaction>
    <physiologicalReaction direction="left-to-right" evidence="2">
        <dbReference type="Rhea" id="RHEA:40144"/>
    </physiologicalReaction>
</comment>
<comment type="catalytic activity">
    <reaction evidence="2">
        <text>eicosanoyl-CoA + H2O = eicosanoate + CoA + H(+)</text>
        <dbReference type="Rhea" id="RHEA:40147"/>
        <dbReference type="ChEBI" id="CHEBI:15377"/>
        <dbReference type="ChEBI" id="CHEBI:15378"/>
        <dbReference type="ChEBI" id="CHEBI:32360"/>
        <dbReference type="ChEBI" id="CHEBI:57287"/>
        <dbReference type="ChEBI" id="CHEBI:57380"/>
    </reaction>
    <physiologicalReaction direction="left-to-right" evidence="2">
        <dbReference type="Rhea" id="RHEA:40148"/>
    </physiologicalReaction>
</comment>
<comment type="catalytic activity">
    <reaction evidence="2">
        <text>(5Z,8Z,11Z,14Z)-eicosatetraenoyl-CoA + H2O = (5Z,8Z,11Z,14Z)-eicosatetraenoate + CoA + H(+)</text>
        <dbReference type="Rhea" id="RHEA:40151"/>
        <dbReference type="ChEBI" id="CHEBI:15377"/>
        <dbReference type="ChEBI" id="CHEBI:15378"/>
        <dbReference type="ChEBI" id="CHEBI:32395"/>
        <dbReference type="ChEBI" id="CHEBI:57287"/>
        <dbReference type="ChEBI" id="CHEBI:57368"/>
    </reaction>
    <physiologicalReaction direction="left-to-right" evidence="2">
        <dbReference type="Rhea" id="RHEA:40152"/>
    </physiologicalReaction>
</comment>
<comment type="catalytic activity">
    <reaction evidence="2">
        <text>4,8-dimethylnonanoyl-CoA + H2O = 4,8-dimethylnonanoate + CoA + H(+)</text>
        <dbReference type="Rhea" id="RHEA:40223"/>
        <dbReference type="ChEBI" id="CHEBI:15377"/>
        <dbReference type="ChEBI" id="CHEBI:15378"/>
        <dbReference type="ChEBI" id="CHEBI:57287"/>
        <dbReference type="ChEBI" id="CHEBI:77061"/>
        <dbReference type="ChEBI" id="CHEBI:77063"/>
    </reaction>
    <physiologicalReaction direction="left-to-right" evidence="2">
        <dbReference type="Rhea" id="RHEA:40224"/>
    </physiologicalReaction>
</comment>
<comment type="catalytic activity">
    <reaction evidence="3">
        <text>2,6-dimethylheptanoyl-CoA + H2O = 2,6-dimethylheptanoate + CoA + H(+)</text>
        <dbReference type="Rhea" id="RHEA:59952"/>
        <dbReference type="ChEBI" id="CHEBI:15377"/>
        <dbReference type="ChEBI" id="CHEBI:15378"/>
        <dbReference type="ChEBI" id="CHEBI:57287"/>
        <dbReference type="ChEBI" id="CHEBI:84847"/>
        <dbReference type="ChEBI" id="CHEBI:143533"/>
    </reaction>
    <physiologicalReaction direction="left-to-right" evidence="3">
        <dbReference type="Rhea" id="RHEA:59953"/>
    </physiologicalReaction>
</comment>
<comment type="catalytic activity">
    <reaction evidence="2">
        <text>(3S)-3-hydroxy-3-methylglutaryl-CoA + H2O = 3-hydroxy-3-methylglutarate + CoA + H(+)</text>
        <dbReference type="Rhea" id="RHEA:16305"/>
        <dbReference type="ChEBI" id="CHEBI:15377"/>
        <dbReference type="ChEBI" id="CHEBI:15378"/>
        <dbReference type="ChEBI" id="CHEBI:17325"/>
        <dbReference type="ChEBI" id="CHEBI:43074"/>
        <dbReference type="ChEBI" id="CHEBI:57287"/>
        <dbReference type="EC" id="3.1.2.5"/>
    </reaction>
    <physiologicalReaction direction="left-to-right" evidence="2">
        <dbReference type="Rhea" id="RHEA:16306"/>
    </physiologicalReaction>
</comment>
<comment type="catalytic activity">
    <reaction evidence="2">
        <text>3alpha,7alpha,12alpha-trihydroxy-5beta-cholestan-26-oyl-CoA + H2O = 3alpha,7alpha,12alpha-trihydroxy-5beta-cholestan-26-oate + CoA + H(+)</text>
        <dbReference type="Rhea" id="RHEA:59936"/>
        <dbReference type="ChEBI" id="CHEBI:15377"/>
        <dbReference type="ChEBI" id="CHEBI:15378"/>
        <dbReference type="ChEBI" id="CHEBI:57287"/>
        <dbReference type="ChEBI" id="CHEBI:63001"/>
        <dbReference type="ChEBI" id="CHEBI:85674"/>
    </reaction>
    <physiologicalReaction direction="left-to-right" evidence="2">
        <dbReference type="Rhea" id="RHEA:59937"/>
    </physiologicalReaction>
</comment>
<comment type="catalytic activity">
    <reaction evidence="2">
        <text>2-methyloctadecanoyl-CoA + H2O = 2-methyloctadecanoate + CoA + H(+)</text>
        <dbReference type="Rhea" id="RHEA:59940"/>
        <dbReference type="ChEBI" id="CHEBI:15377"/>
        <dbReference type="ChEBI" id="CHEBI:15378"/>
        <dbReference type="ChEBI" id="CHEBI:57287"/>
        <dbReference type="ChEBI" id="CHEBI:143530"/>
        <dbReference type="ChEBI" id="CHEBI:143531"/>
    </reaction>
    <physiologicalReaction direction="left-to-right" evidence="2">
        <dbReference type="Rhea" id="RHEA:59941"/>
    </physiologicalReaction>
</comment>
<comment type="catalytic activity">
    <reaction evidence="2">
        <text>prostaglandin F2alpha-CoA + H2O = prostaglandin F2alpha + CoA + H(+)</text>
        <dbReference type="Rhea" id="RHEA:59948"/>
        <dbReference type="ChEBI" id="CHEBI:15377"/>
        <dbReference type="ChEBI" id="CHEBI:15378"/>
        <dbReference type="ChEBI" id="CHEBI:57287"/>
        <dbReference type="ChEBI" id="CHEBI:57404"/>
        <dbReference type="ChEBI" id="CHEBI:143532"/>
    </reaction>
    <physiologicalReaction direction="left-to-right" evidence="2">
        <dbReference type="Rhea" id="RHEA:59949"/>
    </physiologicalReaction>
</comment>
<comment type="activity regulation">
    <text evidence="2">Inhibited by CoASH (IC(50)=10-15 uM). Also inhibited by cysteine-reactive agents.</text>
</comment>
<comment type="biophysicochemical properties">
    <kinetics>
        <KM evidence="9">10.1 uM for decanoyl-CoA</KM>
        <Vmax evidence="9">7.1 umol/min/mg enzyme</Vmax>
    </kinetics>
</comment>
<comment type="pathway">
    <text evidence="14 16">Lipid metabolism; fatty acid metabolism.</text>
</comment>
<comment type="subunit">
    <text evidence="2">Homodimer (By similarity).</text>
</comment>
<comment type="subunit">
    <text evidence="9 10">(Microbial infection) Interacts with human immunodeficiency virus (HIV-1) Nef (via middle region); this interaction enhances ACOT8 Acyl-CoA thioesterase activity and occurs in a Nef myristoylation-independent manner (PubMed:9299485). According to a second report, the interaction with HIV-1 Nef occurs in a Nef myristoylation-independent manner but does not enhance ACOT8 Acyl-CoA thioesterase activity (PubMed:9153233).</text>
</comment>
<comment type="interaction">
    <interactant intactId="EBI-1237371">
        <id>O14734</id>
    </interactant>
    <interactant intactId="EBI-349854">
        <id>P13569</id>
        <label>CFTR</label>
    </interactant>
    <organismsDiffer>false</organismsDiffer>
    <experiments>3</experiments>
</comment>
<comment type="interaction">
    <interactant intactId="EBI-1237371">
        <id>O14734</id>
    </interactant>
    <interactant intactId="EBI-10181968">
        <id>Q7Z4N8</id>
        <label>P4HA3</label>
    </interactant>
    <organismsDiffer>false</organismsDiffer>
    <experiments>3</experiments>
</comment>
<comment type="interaction">
    <interactant intactId="EBI-1237371">
        <id>O14734</id>
    </interactant>
    <interactant intactId="EBI-597835">
        <id>P50542</id>
        <label>PEX5</label>
    </interactant>
    <organismsDiffer>false</organismsDiffer>
    <experiments>3</experiments>
</comment>
<comment type="interaction">
    <interactant intactId="EBI-1237371">
        <id>O14734</id>
    </interactant>
    <interactant intactId="EBI-307352">
        <id>Q04864</id>
        <label>REL</label>
    </interactant>
    <organismsDiffer>false</organismsDiffer>
    <experiments>3</experiments>
</comment>
<comment type="interaction">
    <interactant intactId="EBI-1237371">
        <id>O14734</id>
    </interactant>
    <interactant intactId="EBI-10829018">
        <id>Q04864-2</id>
        <label>REL</label>
    </interactant>
    <organismsDiffer>false</organismsDiffer>
    <experiments>3</experiments>
</comment>
<comment type="interaction">
    <interactant intactId="EBI-1237371">
        <id>O14734</id>
    </interactant>
    <interactant intactId="EBI-6164028">
        <id>P04601</id>
        <label>nef</label>
    </interactant>
    <organismsDiffer>true</organismsDiffer>
    <experiments>7</experiments>
</comment>
<comment type="subcellular location">
    <subcellularLocation>
        <location evidence="6 8">Peroxisome matrix</location>
    </subcellularLocation>
    <text evidence="6 8">Predominantly localized in the peroxisome but a localization to the cytosol cannot be excluded.</text>
</comment>
<comment type="tissue specificity">
    <text evidence="9 10">Detected in a T-cell line (at protein level). Ubiquitous (PubMed:9153233, PubMed:9299485).</text>
</comment>
<comment type="induction">
    <text evidence="1">Regulated by peroxisome proliferator (such as Clofibrate), via the peroxisome proliferator-activated receptors (PPARs).</text>
</comment>
<comment type="similarity">
    <text evidence="13">Belongs to the C/M/P thioester hydrolase family.</text>
</comment>
<gene>
    <name type="primary">ACOT8</name>
    <name type="synonym">ACTEIII</name>
    <name evidence="11" type="synonym">PTE1</name>
</gene>
<reference key="1">
    <citation type="journal article" date="1997" name="Biochem. Biophys. Res. Commun.">
        <title>A novel acyl-CoA thioesterase enhances its enzymatic activity by direct binding with HIV Nef.</title>
        <authorList>
            <person name="Watanabe H."/>
            <person name="Shiratori T."/>
            <person name="Shoji H."/>
            <person name="Miyatake S."/>
            <person name="Okazaki Y."/>
            <person name="Ikuta K."/>
            <person name="Sato T."/>
            <person name="Saito T."/>
        </authorList>
    </citation>
    <scope>NUCLEOTIDE SEQUENCE [MRNA]</scope>
    <scope>FUNCTION</scope>
    <scope>CATALYTIC ACTIVITY</scope>
    <scope>PATHWAY</scope>
    <scope>INTERACTION WITH HIV-1 NEF (MICROBIAL INFECTION)</scope>
    <scope>TISSUE SPECIFICITY</scope>
</reference>
<reference key="2">
    <citation type="journal article" date="1997" name="J. Biol. Chem.">
        <title>Binding of HIV-1 Nef to a novel thioesterase enzyme correlates with Nef-mediated CD4 down-regulation.</title>
        <authorList>
            <person name="Liu L.X."/>
            <person name="Margottin F."/>
            <person name="Le Gall S."/>
            <person name="Schwartz O."/>
            <person name="Selig L."/>
            <person name="Benarous R."/>
            <person name="Benichou S."/>
        </authorList>
    </citation>
    <scope>NUCLEOTIDE SEQUENCE [MRNA]</scope>
    <scope>FUNCTION</scope>
    <scope>FUNCTION (MICROBIAL INFECTION)</scope>
    <scope>CATALYTIC ACTIVITY</scope>
    <scope>BIOPHYSICOCHEMICAL PROPERTIES</scope>
    <scope>INTERACTION WITH HIV-1 NEF (MICROBIAL INFECTION)</scope>
    <scope>TISSUE SPECIFICITY</scope>
    <source>
        <tissue>Lymphoid tissue</tissue>
    </source>
</reference>
<reference key="3">
    <citation type="journal article" date="1999" name="J. Biol. Chem.">
        <title>Identification of peroxisomal acyl-CoA thioesterases in yeast and humans.</title>
        <authorList>
            <person name="Jones J.M."/>
            <person name="Nau K."/>
            <person name="Geraghty M.T."/>
            <person name="Erdmann R."/>
            <person name="Gould S.J."/>
        </authorList>
    </citation>
    <scope>NUCLEOTIDE SEQUENCE [MRNA]</scope>
    <scope>SUBCELLULAR LOCATION</scope>
    <source>
        <tissue>Muscle</tissue>
    </source>
</reference>
<reference key="4">
    <citation type="journal article" date="2001" name="Nature">
        <title>The DNA sequence and comparative analysis of human chromosome 20.</title>
        <authorList>
            <person name="Deloukas P."/>
            <person name="Matthews L.H."/>
            <person name="Ashurst J.L."/>
            <person name="Burton J."/>
            <person name="Gilbert J.G.R."/>
            <person name="Jones M."/>
            <person name="Stavrides G."/>
            <person name="Almeida J.P."/>
            <person name="Babbage A.K."/>
            <person name="Bagguley C.L."/>
            <person name="Bailey J."/>
            <person name="Barlow K.F."/>
            <person name="Bates K.N."/>
            <person name="Beard L.M."/>
            <person name="Beare D.M."/>
            <person name="Beasley O.P."/>
            <person name="Bird C.P."/>
            <person name="Blakey S.E."/>
            <person name="Bridgeman A.M."/>
            <person name="Brown A.J."/>
            <person name="Buck D."/>
            <person name="Burrill W.D."/>
            <person name="Butler A.P."/>
            <person name="Carder C."/>
            <person name="Carter N.P."/>
            <person name="Chapman J.C."/>
            <person name="Clamp M."/>
            <person name="Clark G."/>
            <person name="Clark L.N."/>
            <person name="Clark S.Y."/>
            <person name="Clee C.M."/>
            <person name="Clegg S."/>
            <person name="Cobley V.E."/>
            <person name="Collier R.E."/>
            <person name="Connor R.E."/>
            <person name="Corby N.R."/>
            <person name="Coulson A."/>
            <person name="Coville G.J."/>
            <person name="Deadman R."/>
            <person name="Dhami P.D."/>
            <person name="Dunn M."/>
            <person name="Ellington A.G."/>
            <person name="Frankland J.A."/>
            <person name="Fraser A."/>
            <person name="French L."/>
            <person name="Garner P."/>
            <person name="Grafham D.V."/>
            <person name="Griffiths C."/>
            <person name="Griffiths M.N.D."/>
            <person name="Gwilliam R."/>
            <person name="Hall R.E."/>
            <person name="Hammond S."/>
            <person name="Harley J.L."/>
            <person name="Heath P.D."/>
            <person name="Ho S."/>
            <person name="Holden J.L."/>
            <person name="Howden P.J."/>
            <person name="Huckle E."/>
            <person name="Hunt A.R."/>
            <person name="Hunt S.E."/>
            <person name="Jekosch K."/>
            <person name="Johnson C.M."/>
            <person name="Johnson D."/>
            <person name="Kay M.P."/>
            <person name="Kimberley A.M."/>
            <person name="King A."/>
            <person name="Knights A."/>
            <person name="Laird G.K."/>
            <person name="Lawlor S."/>
            <person name="Lehvaeslaiho M.H."/>
            <person name="Leversha M.A."/>
            <person name="Lloyd C."/>
            <person name="Lloyd D.M."/>
            <person name="Lovell J.D."/>
            <person name="Marsh V.L."/>
            <person name="Martin S.L."/>
            <person name="McConnachie L.J."/>
            <person name="McLay K."/>
            <person name="McMurray A.A."/>
            <person name="Milne S.A."/>
            <person name="Mistry D."/>
            <person name="Moore M.J.F."/>
            <person name="Mullikin J.C."/>
            <person name="Nickerson T."/>
            <person name="Oliver K."/>
            <person name="Parker A."/>
            <person name="Patel R."/>
            <person name="Pearce T.A.V."/>
            <person name="Peck A.I."/>
            <person name="Phillimore B.J.C.T."/>
            <person name="Prathalingam S.R."/>
            <person name="Plumb R.W."/>
            <person name="Ramsay H."/>
            <person name="Rice C.M."/>
            <person name="Ross M.T."/>
            <person name="Scott C.E."/>
            <person name="Sehra H.K."/>
            <person name="Shownkeen R."/>
            <person name="Sims S."/>
            <person name="Skuce C.D."/>
            <person name="Smith M.L."/>
            <person name="Soderlund C."/>
            <person name="Steward C.A."/>
            <person name="Sulston J.E."/>
            <person name="Swann R.M."/>
            <person name="Sycamore N."/>
            <person name="Taylor R."/>
            <person name="Tee L."/>
            <person name="Thomas D.W."/>
            <person name="Thorpe A."/>
            <person name="Tracey A."/>
            <person name="Tromans A.C."/>
            <person name="Vaudin M."/>
            <person name="Wall M."/>
            <person name="Wallis J.M."/>
            <person name="Whitehead S.L."/>
            <person name="Whittaker P."/>
            <person name="Willey D.L."/>
            <person name="Williams L."/>
            <person name="Williams S.A."/>
            <person name="Wilming L."/>
            <person name="Wray P.W."/>
            <person name="Hubbard T."/>
            <person name="Durbin R.M."/>
            <person name="Bentley D.R."/>
            <person name="Beck S."/>
            <person name="Rogers J."/>
        </authorList>
    </citation>
    <scope>NUCLEOTIDE SEQUENCE [LARGE SCALE GENOMIC DNA]</scope>
</reference>
<reference key="5">
    <citation type="journal article" date="2004" name="Genome Res.">
        <title>The status, quality, and expansion of the NIH full-length cDNA project: the Mammalian Gene Collection (MGC).</title>
        <authorList>
            <consortium name="The MGC Project Team"/>
        </authorList>
    </citation>
    <scope>NUCLEOTIDE SEQUENCE [LARGE SCALE MRNA]</scope>
    <source>
        <tissue>Brain</tissue>
    </source>
</reference>
<reference key="6">
    <citation type="journal article" date="2000" name="Biochem. Biophys. Res. Commun.">
        <title>Identification of PTE2, a human peroxisomal long-chain acyl-CoA thioesterase.</title>
        <authorList>
            <person name="Jones J.M."/>
            <person name="Gould S.J."/>
        </authorList>
    </citation>
    <scope>CATALYTIC ACTIVITY</scope>
    <scope>PATHWAY</scope>
</reference>
<reference key="7">
    <citation type="journal article" date="2004" name="Exp. Cell Res.">
        <title>Overexpression of human acyl-CoA thioesterase upregulates peroxisome biogenesis.</title>
        <authorList>
            <person name="Ishizuka M."/>
            <person name="Toyama Y."/>
            <person name="Watanabe H."/>
            <person name="Fujiki Y."/>
            <person name="Takeuchi A."/>
            <person name="Yamasaki S."/>
            <person name="Yuasa S."/>
            <person name="Miyazaki M."/>
            <person name="Nakajima N."/>
            <person name="Taki S."/>
            <person name="Saito T."/>
        </authorList>
    </citation>
    <scope>FUNCTION</scope>
    <scope>SUBCELLULAR LOCATION</scope>
    <scope>MUTAGENESIS OF HIS-78</scope>
</reference>
<reference key="8">
    <citation type="journal article" date="2002" name="Prog. Lipid Res.">
        <title>The role Acyl-CoA thioesterases play in mediating intracellular lipid metabolism.</title>
        <authorList>
            <person name="Hunt M.C."/>
            <person name="Alexson S.E.H."/>
        </authorList>
    </citation>
    <scope>REVIEW</scope>
</reference>
<reference key="9">
    <citation type="journal article" date="2011" name="BMC Syst. Biol.">
        <title>Initial characterization of the human central proteome.</title>
        <authorList>
            <person name="Burkard T.R."/>
            <person name="Planyavsky M."/>
            <person name="Kaupe I."/>
            <person name="Breitwieser F.P."/>
            <person name="Buerckstuemmer T."/>
            <person name="Bennett K.L."/>
            <person name="Superti-Furga G."/>
            <person name="Colinge J."/>
        </authorList>
    </citation>
    <scope>IDENTIFICATION BY MASS SPECTROMETRY [LARGE SCALE ANALYSIS]</scope>
</reference>
<reference key="10">
    <citation type="journal article" date="2015" name="Proteomics">
        <title>N-terminome analysis of the human mitochondrial proteome.</title>
        <authorList>
            <person name="Vaca Jacome A.S."/>
            <person name="Rabilloud T."/>
            <person name="Schaeffer-Reiss C."/>
            <person name="Rompais M."/>
            <person name="Ayoub D."/>
            <person name="Lane L."/>
            <person name="Bairoch A."/>
            <person name="Van Dorsselaer A."/>
            <person name="Carapito C."/>
        </authorList>
    </citation>
    <scope>IDENTIFICATION BY MASS SPECTROMETRY [LARGE SCALE ANALYSIS]</scope>
</reference>
<dbReference type="EC" id="3.1.2.1" evidence="7 10"/>
<dbReference type="EC" id="3.1.2.11" evidence="2"/>
<dbReference type="EC" id="3.1.2.2" evidence="9 10"/>
<dbReference type="EC" id="3.1.2.3" evidence="2"/>
<dbReference type="EC" id="3.1.2.5" evidence="2"/>
<dbReference type="EC" id="3.1.2.27" evidence="10"/>
<dbReference type="EMBL" id="AF014404">
    <property type="protein sequence ID" value="AAB71665.1"/>
    <property type="molecule type" value="mRNA"/>
</dbReference>
<dbReference type="EMBL" id="X86032">
    <property type="protein sequence ID" value="CAA60024.1"/>
    <property type="molecule type" value="mRNA"/>
</dbReference>
<dbReference type="EMBL" id="AF124264">
    <property type="protein sequence ID" value="AAD27616.1"/>
    <property type="molecule type" value="mRNA"/>
</dbReference>
<dbReference type="EMBL" id="AL008726">
    <property type="status" value="NOT_ANNOTATED_CDS"/>
    <property type="molecule type" value="Genomic_DNA"/>
</dbReference>
<dbReference type="EMBL" id="BC117155">
    <property type="protein sequence ID" value="AAI17156.1"/>
    <property type="molecule type" value="mRNA"/>
</dbReference>
<dbReference type="EMBL" id="BC117157">
    <property type="protein sequence ID" value="AAI17158.1"/>
    <property type="molecule type" value="mRNA"/>
</dbReference>
<dbReference type="CCDS" id="CCDS13378.1"/>
<dbReference type="PIR" id="JC5644">
    <property type="entry name" value="JC5644"/>
</dbReference>
<dbReference type="RefSeq" id="NP_005460.2">
    <property type="nucleotide sequence ID" value="NM_005469.3"/>
</dbReference>
<dbReference type="SMR" id="O14734"/>
<dbReference type="BioGRID" id="115323">
    <property type="interactions" value="72"/>
</dbReference>
<dbReference type="DIP" id="DIP-38179N"/>
<dbReference type="FunCoup" id="O14734">
    <property type="interactions" value="589"/>
</dbReference>
<dbReference type="IntAct" id="O14734">
    <property type="interactions" value="31"/>
</dbReference>
<dbReference type="MINT" id="O14734"/>
<dbReference type="STRING" id="9606.ENSP00000217455"/>
<dbReference type="SwissLipids" id="SLP:000000591"/>
<dbReference type="GlyGen" id="O14734">
    <property type="glycosylation" value="1 site, 1 O-linked glycan (1 site)"/>
</dbReference>
<dbReference type="iPTMnet" id="O14734"/>
<dbReference type="PhosphoSitePlus" id="O14734"/>
<dbReference type="SwissPalm" id="O14734"/>
<dbReference type="BioMuta" id="ACOT8"/>
<dbReference type="jPOST" id="O14734"/>
<dbReference type="MassIVE" id="O14734"/>
<dbReference type="PaxDb" id="9606-ENSP00000217455"/>
<dbReference type="PeptideAtlas" id="O14734"/>
<dbReference type="ProteomicsDB" id="48196"/>
<dbReference type="Pumba" id="O14734"/>
<dbReference type="Antibodypedia" id="4138">
    <property type="antibodies" value="243 antibodies from 28 providers"/>
</dbReference>
<dbReference type="DNASU" id="10005"/>
<dbReference type="Ensembl" id="ENST00000217455.9">
    <property type="protein sequence ID" value="ENSP00000217455.4"/>
    <property type="gene ID" value="ENSG00000101473.17"/>
</dbReference>
<dbReference type="GeneID" id="10005"/>
<dbReference type="KEGG" id="hsa:10005"/>
<dbReference type="MANE-Select" id="ENST00000217455.9">
    <property type="protein sequence ID" value="ENSP00000217455.4"/>
    <property type="RefSeq nucleotide sequence ID" value="NM_005469.4"/>
    <property type="RefSeq protein sequence ID" value="NP_005460.2"/>
</dbReference>
<dbReference type="UCSC" id="uc002xqa.3">
    <property type="organism name" value="human"/>
</dbReference>
<dbReference type="AGR" id="HGNC:15919"/>
<dbReference type="CTD" id="10005"/>
<dbReference type="DisGeNET" id="10005"/>
<dbReference type="GeneCards" id="ACOT8"/>
<dbReference type="HGNC" id="HGNC:15919">
    <property type="gene designation" value="ACOT8"/>
</dbReference>
<dbReference type="HPA" id="ENSG00000101473">
    <property type="expression patterns" value="Low tissue specificity"/>
</dbReference>
<dbReference type="MIM" id="608123">
    <property type="type" value="gene"/>
</dbReference>
<dbReference type="neXtProt" id="NX_O14734"/>
<dbReference type="OpenTargets" id="ENSG00000101473"/>
<dbReference type="PharmGKB" id="PA33941"/>
<dbReference type="VEuPathDB" id="HostDB:ENSG00000101473"/>
<dbReference type="eggNOG" id="KOG3016">
    <property type="taxonomic scope" value="Eukaryota"/>
</dbReference>
<dbReference type="GeneTree" id="ENSGT00390000004207"/>
<dbReference type="InParanoid" id="O14734"/>
<dbReference type="OMA" id="QVWFRTN"/>
<dbReference type="OrthoDB" id="68328at2759"/>
<dbReference type="PAN-GO" id="O14734">
    <property type="GO annotations" value="4 GO annotations based on evolutionary models"/>
</dbReference>
<dbReference type="PhylomeDB" id="O14734"/>
<dbReference type="TreeFam" id="TF315124"/>
<dbReference type="BioCyc" id="MetaCyc:HS02282-MONOMER"/>
<dbReference type="BRENDA" id="3.1.2.2">
    <property type="organism ID" value="2681"/>
</dbReference>
<dbReference type="BRENDA" id="3.1.2.20">
    <property type="organism ID" value="2681"/>
</dbReference>
<dbReference type="PathwayCommons" id="O14734"/>
<dbReference type="Reactome" id="R-HSA-193368">
    <property type="pathway name" value="Synthesis of bile acids and bile salts via 7alpha-hydroxycholesterol"/>
</dbReference>
<dbReference type="Reactome" id="R-HSA-2046106">
    <property type="pathway name" value="alpha-linolenic acid (ALA) metabolism"/>
</dbReference>
<dbReference type="Reactome" id="R-HSA-389887">
    <property type="pathway name" value="Beta-oxidation of pristanoyl-CoA"/>
</dbReference>
<dbReference type="Reactome" id="R-HSA-390247">
    <property type="pathway name" value="Beta-oxidation of very long chain fatty acids"/>
</dbReference>
<dbReference type="Reactome" id="R-HSA-9033241">
    <property type="pathway name" value="Peroxisomal protein import"/>
</dbReference>
<dbReference type="SABIO-RK" id="O14734"/>
<dbReference type="SignaLink" id="O14734"/>
<dbReference type="SIGNOR" id="O14734"/>
<dbReference type="UniPathway" id="UPA00199"/>
<dbReference type="BioGRID-ORCS" id="10005">
    <property type="hits" value="16 hits in 1156 CRISPR screens"/>
</dbReference>
<dbReference type="CD-CODE" id="FB4E32DD">
    <property type="entry name" value="Presynaptic clusters and postsynaptic densities"/>
</dbReference>
<dbReference type="ChiTaRS" id="ACOT8">
    <property type="organism name" value="human"/>
</dbReference>
<dbReference type="GeneWiki" id="ACOT8"/>
<dbReference type="GenomeRNAi" id="10005"/>
<dbReference type="Pharos" id="O14734">
    <property type="development level" value="Tbio"/>
</dbReference>
<dbReference type="PRO" id="PR:O14734"/>
<dbReference type="Proteomes" id="UP000005640">
    <property type="component" value="Chromosome 20"/>
</dbReference>
<dbReference type="RNAct" id="O14734">
    <property type="molecule type" value="protein"/>
</dbReference>
<dbReference type="Bgee" id="ENSG00000101473">
    <property type="expression patterns" value="Expressed in mucosa of transverse colon and 168 other cell types or tissues"/>
</dbReference>
<dbReference type="ExpressionAtlas" id="O14734">
    <property type="expression patterns" value="baseline and differential"/>
</dbReference>
<dbReference type="GO" id="GO:0005829">
    <property type="term" value="C:cytosol"/>
    <property type="evidence" value="ECO:0000304"/>
    <property type="project" value="Reactome"/>
</dbReference>
<dbReference type="GO" id="GO:0005782">
    <property type="term" value="C:peroxisomal matrix"/>
    <property type="evidence" value="ECO:0000314"/>
    <property type="project" value="UniProtKB"/>
</dbReference>
<dbReference type="GO" id="GO:0047603">
    <property type="term" value="F:acetoacetyl-CoA hydrolase activity"/>
    <property type="evidence" value="ECO:0007669"/>
    <property type="project" value="UniProtKB-EC"/>
</dbReference>
<dbReference type="GO" id="GO:0003986">
    <property type="term" value="F:acetyl-CoA hydrolase activity"/>
    <property type="evidence" value="ECO:0000304"/>
    <property type="project" value="Reactome"/>
</dbReference>
<dbReference type="GO" id="GO:0016289">
    <property type="term" value="F:acyl-CoA hydrolase activity"/>
    <property type="evidence" value="ECO:0000304"/>
    <property type="project" value="Reactome"/>
</dbReference>
<dbReference type="GO" id="GO:0052689">
    <property type="term" value="F:carboxylic ester hydrolase activity"/>
    <property type="evidence" value="ECO:0007669"/>
    <property type="project" value="UniProtKB-KW"/>
</dbReference>
<dbReference type="GO" id="GO:0033882">
    <property type="term" value="F:choloyl-CoA hydrolase activity"/>
    <property type="evidence" value="ECO:0007669"/>
    <property type="project" value="UniProtKB-EC"/>
</dbReference>
<dbReference type="GO" id="GO:0047617">
    <property type="term" value="F:fatty acyl-CoA hydrolase activity"/>
    <property type="evidence" value="ECO:0000314"/>
    <property type="project" value="UniProtKB"/>
</dbReference>
<dbReference type="GO" id="GO:0047994">
    <property type="term" value="F:hydroxymethylglutaryl-CoA hydrolase activity"/>
    <property type="evidence" value="ECO:0007669"/>
    <property type="project" value="UniProtKB-EC"/>
</dbReference>
<dbReference type="GO" id="GO:0052816">
    <property type="term" value="F:long-chain fatty acyl-CoA hydrolase activity"/>
    <property type="evidence" value="ECO:0000314"/>
    <property type="project" value="UniProtKB"/>
</dbReference>
<dbReference type="GO" id="GO:0052815">
    <property type="term" value="F:medium-chain fatty acyl-CoA hydrolase activity"/>
    <property type="evidence" value="ECO:0000314"/>
    <property type="project" value="UniProtKB"/>
</dbReference>
<dbReference type="GO" id="GO:0004778">
    <property type="term" value="F:succinyl-CoA hydrolase activity"/>
    <property type="evidence" value="ECO:0007669"/>
    <property type="project" value="UniProtKB-EC"/>
</dbReference>
<dbReference type="GO" id="GO:0006637">
    <property type="term" value="P:acyl-CoA metabolic process"/>
    <property type="evidence" value="ECO:0000314"/>
    <property type="project" value="UniProtKB"/>
</dbReference>
<dbReference type="GO" id="GO:0036109">
    <property type="term" value="P:alpha-linolenic acid metabolic process"/>
    <property type="evidence" value="ECO:0000304"/>
    <property type="project" value="Reactome"/>
</dbReference>
<dbReference type="GO" id="GO:0006699">
    <property type="term" value="P:bile acid biosynthetic process"/>
    <property type="evidence" value="ECO:0000304"/>
    <property type="project" value="Reactome"/>
</dbReference>
<dbReference type="GO" id="GO:0043649">
    <property type="term" value="P:dicarboxylic acid catabolic process"/>
    <property type="evidence" value="ECO:0000314"/>
    <property type="project" value="UniProtKB"/>
</dbReference>
<dbReference type="GO" id="GO:0033540">
    <property type="term" value="P:fatty acid beta-oxidation using acyl-CoA oxidase"/>
    <property type="evidence" value="ECO:0000304"/>
    <property type="project" value="Reactome"/>
</dbReference>
<dbReference type="GO" id="GO:0009062">
    <property type="term" value="P:fatty acid catabolic process"/>
    <property type="evidence" value="ECO:0000318"/>
    <property type="project" value="GO_Central"/>
</dbReference>
<dbReference type="GO" id="GO:1901570">
    <property type="term" value="P:fatty acid derivative biosynthetic process"/>
    <property type="evidence" value="ECO:0007669"/>
    <property type="project" value="Ensembl"/>
</dbReference>
<dbReference type="GO" id="GO:0042759">
    <property type="term" value="P:long-chain fatty acid biosynthetic process"/>
    <property type="evidence" value="ECO:0007669"/>
    <property type="project" value="Ensembl"/>
</dbReference>
<dbReference type="GO" id="GO:0010561">
    <property type="term" value="P:negative regulation of glycoprotein biosynthetic process"/>
    <property type="evidence" value="ECO:0000314"/>
    <property type="project" value="UniProtKB"/>
</dbReference>
<dbReference type="GO" id="GO:0016559">
    <property type="term" value="P:peroxisome fission"/>
    <property type="evidence" value="ECO:0000314"/>
    <property type="project" value="UniProtKB"/>
</dbReference>
<dbReference type="GO" id="GO:0006636">
    <property type="term" value="P:unsaturated fatty acid biosynthetic process"/>
    <property type="evidence" value="ECO:0007669"/>
    <property type="project" value="Ensembl"/>
</dbReference>
<dbReference type="CDD" id="cd03444">
    <property type="entry name" value="Thioesterase_II_repeat1"/>
    <property type="match status" value="1"/>
</dbReference>
<dbReference type="CDD" id="cd03445">
    <property type="entry name" value="Thioesterase_II_repeat2"/>
    <property type="match status" value="1"/>
</dbReference>
<dbReference type="FunFam" id="2.40.160.210:FF:000002">
    <property type="entry name" value="acyl-coenzyme A thioesterase 8"/>
    <property type="match status" value="1"/>
</dbReference>
<dbReference type="Gene3D" id="2.40.160.210">
    <property type="entry name" value="Acyl-CoA thioesterase, double hotdog domain"/>
    <property type="match status" value="1"/>
</dbReference>
<dbReference type="InterPro" id="IPR049450">
    <property type="entry name" value="ACOT8-like_C"/>
</dbReference>
<dbReference type="InterPro" id="IPR042171">
    <property type="entry name" value="Acyl-CoA_hotdog"/>
</dbReference>
<dbReference type="InterPro" id="IPR003703">
    <property type="entry name" value="Acyl_CoA_thio"/>
</dbReference>
<dbReference type="InterPro" id="IPR029069">
    <property type="entry name" value="HotDog_dom_sf"/>
</dbReference>
<dbReference type="InterPro" id="IPR049449">
    <property type="entry name" value="TesB_ACOT8-like_N"/>
</dbReference>
<dbReference type="NCBIfam" id="TIGR00189">
    <property type="entry name" value="tesB"/>
    <property type="match status" value="1"/>
</dbReference>
<dbReference type="PANTHER" id="PTHR11066">
    <property type="entry name" value="ACYL-COA THIOESTERASE"/>
    <property type="match status" value="1"/>
</dbReference>
<dbReference type="PANTHER" id="PTHR11066:SF34">
    <property type="entry name" value="ACYL-COENZYME A THIOESTERASE 8"/>
    <property type="match status" value="1"/>
</dbReference>
<dbReference type="Pfam" id="PF13622">
    <property type="entry name" value="4HBT_3"/>
    <property type="match status" value="1"/>
</dbReference>
<dbReference type="Pfam" id="PF20789">
    <property type="entry name" value="4HBT_3C"/>
    <property type="match status" value="1"/>
</dbReference>
<dbReference type="SUPFAM" id="SSF54637">
    <property type="entry name" value="Thioesterase/thiol ester dehydrase-isomerase"/>
    <property type="match status" value="2"/>
</dbReference>
<keyword id="KW-0276">Fatty acid metabolism</keyword>
<keyword id="KW-0945">Host-virus interaction</keyword>
<keyword id="KW-0378">Hydrolase</keyword>
<keyword id="KW-0443">Lipid metabolism</keyword>
<keyword id="KW-0576">Peroxisome</keyword>
<keyword id="KW-0962">Peroxisome biogenesis</keyword>
<keyword id="KW-1267">Proteomics identification</keyword>
<keyword id="KW-1185">Reference proteome</keyword>
<keyword id="KW-0719">Serine esterase</keyword>
<protein>
    <recommendedName>
        <fullName>Acyl-coenzyme A thioesterase 8</fullName>
        <shortName>Acyl-CoA thioesterase 8</shortName>
        <ecNumber evidence="7 10">3.1.2.1</ecNumber>
        <ecNumber evidence="2">3.1.2.11</ecNumber>
        <ecNumber evidence="9 10">3.1.2.2</ecNumber>
        <ecNumber evidence="2">3.1.2.3</ecNumber>
        <ecNumber evidence="2">3.1.2.5</ecNumber>
    </recommendedName>
    <alternativeName>
        <fullName>Choloyl-coenzyme A thioesterase</fullName>
        <ecNumber evidence="10">3.1.2.27</ecNumber>
    </alternativeName>
    <alternativeName>
        <fullName>HIV-Nef-associated acyl-CoA thioesterase</fullName>
    </alternativeName>
    <alternativeName>
        <fullName evidence="12">Peroxisomal acyl-CoA thioesterase 2</fullName>
        <shortName evidence="12">PTE-2</shortName>
    </alternativeName>
    <alternativeName>
        <fullName>Peroxisomal acyl-coenzyme A thioester hydrolase 1</fullName>
        <shortName>PTE-1</shortName>
    </alternativeName>
    <alternativeName>
        <fullName>Peroxisomal long-chain acyl-CoA thioesterase 1</fullName>
    </alternativeName>
    <alternativeName>
        <fullName>Thioesterase II</fullName>
        <shortName>hACTE-III</shortName>
        <shortName>hACTEIII</shortName>
        <shortName>hTE</shortName>
    </alternativeName>
</protein>